<protein>
    <recommendedName>
        <fullName evidence="1">DNA-directed RNA polymerase subunit beta'</fullName>
        <shortName evidence="1">RNAP subunit beta'</shortName>
        <ecNumber evidence="1">2.7.7.6</ecNumber>
    </recommendedName>
    <alternativeName>
        <fullName evidence="1">RNA polymerase subunit beta'</fullName>
    </alternativeName>
    <alternativeName>
        <fullName evidence="1">Transcriptase subunit beta'</fullName>
    </alternativeName>
</protein>
<proteinExistence type="inferred from homology"/>
<evidence type="ECO:0000255" key="1">
    <source>
        <dbReference type="HAMAP-Rule" id="MF_01322"/>
    </source>
</evidence>
<feature type="chain" id="PRO_0000353353" description="DNA-directed RNA polymerase subunit beta'">
    <location>
        <begin position="1"/>
        <end position="1407"/>
    </location>
</feature>
<feature type="binding site" evidence="1">
    <location>
        <position position="70"/>
    </location>
    <ligand>
        <name>Zn(2+)</name>
        <dbReference type="ChEBI" id="CHEBI:29105"/>
        <label>1</label>
    </ligand>
</feature>
<feature type="binding site" evidence="1">
    <location>
        <position position="72"/>
    </location>
    <ligand>
        <name>Zn(2+)</name>
        <dbReference type="ChEBI" id="CHEBI:29105"/>
        <label>1</label>
    </ligand>
</feature>
<feature type="binding site" evidence="1">
    <location>
        <position position="85"/>
    </location>
    <ligand>
        <name>Zn(2+)</name>
        <dbReference type="ChEBI" id="CHEBI:29105"/>
        <label>1</label>
    </ligand>
</feature>
<feature type="binding site" evidence="1">
    <location>
        <position position="88"/>
    </location>
    <ligand>
        <name>Zn(2+)</name>
        <dbReference type="ChEBI" id="CHEBI:29105"/>
        <label>1</label>
    </ligand>
</feature>
<feature type="binding site" evidence="1">
    <location>
        <position position="460"/>
    </location>
    <ligand>
        <name>Mg(2+)</name>
        <dbReference type="ChEBI" id="CHEBI:18420"/>
    </ligand>
</feature>
<feature type="binding site" evidence="1">
    <location>
        <position position="462"/>
    </location>
    <ligand>
        <name>Mg(2+)</name>
        <dbReference type="ChEBI" id="CHEBI:18420"/>
    </ligand>
</feature>
<feature type="binding site" evidence="1">
    <location>
        <position position="464"/>
    </location>
    <ligand>
        <name>Mg(2+)</name>
        <dbReference type="ChEBI" id="CHEBI:18420"/>
    </ligand>
</feature>
<feature type="binding site" evidence="1">
    <location>
        <position position="814"/>
    </location>
    <ligand>
        <name>Zn(2+)</name>
        <dbReference type="ChEBI" id="CHEBI:29105"/>
        <label>2</label>
    </ligand>
</feature>
<feature type="binding site" evidence="1">
    <location>
        <position position="888"/>
    </location>
    <ligand>
        <name>Zn(2+)</name>
        <dbReference type="ChEBI" id="CHEBI:29105"/>
        <label>2</label>
    </ligand>
</feature>
<feature type="binding site" evidence="1">
    <location>
        <position position="895"/>
    </location>
    <ligand>
        <name>Zn(2+)</name>
        <dbReference type="ChEBI" id="CHEBI:29105"/>
        <label>2</label>
    </ligand>
</feature>
<feature type="binding site" evidence="1">
    <location>
        <position position="898"/>
    </location>
    <ligand>
        <name>Zn(2+)</name>
        <dbReference type="ChEBI" id="CHEBI:29105"/>
        <label>2</label>
    </ligand>
</feature>
<keyword id="KW-0240">DNA-directed RNA polymerase</keyword>
<keyword id="KW-0460">Magnesium</keyword>
<keyword id="KW-0479">Metal-binding</keyword>
<keyword id="KW-0548">Nucleotidyltransferase</keyword>
<keyword id="KW-1185">Reference proteome</keyword>
<keyword id="KW-0804">Transcription</keyword>
<keyword id="KW-0808">Transferase</keyword>
<keyword id="KW-0862">Zinc</keyword>
<organism>
    <name type="scientific">Erwinia tasmaniensis (strain DSM 17950 / CFBP 7177 / CIP 109463 / NCPPB 4357 / Et1/99)</name>
    <dbReference type="NCBI Taxonomy" id="465817"/>
    <lineage>
        <taxon>Bacteria</taxon>
        <taxon>Pseudomonadati</taxon>
        <taxon>Pseudomonadota</taxon>
        <taxon>Gammaproteobacteria</taxon>
        <taxon>Enterobacterales</taxon>
        <taxon>Erwiniaceae</taxon>
        <taxon>Erwinia</taxon>
    </lineage>
</organism>
<reference key="1">
    <citation type="journal article" date="2008" name="Environ. Microbiol.">
        <title>The genome of Erwinia tasmaniensis strain Et1/99, a non-pathogenic bacterium in the genus Erwinia.</title>
        <authorList>
            <person name="Kube M."/>
            <person name="Migdoll A.M."/>
            <person name="Mueller I."/>
            <person name="Kuhl H."/>
            <person name="Beck A."/>
            <person name="Reinhardt R."/>
            <person name="Geider K."/>
        </authorList>
    </citation>
    <scope>NUCLEOTIDE SEQUENCE [LARGE SCALE GENOMIC DNA]</scope>
    <source>
        <strain>DSM 17950 / CFBP 7177 / CIP 109463 / NCPPB 4357 / Et1/99</strain>
    </source>
</reference>
<comment type="function">
    <text evidence="1">DNA-dependent RNA polymerase catalyzes the transcription of DNA into RNA using the four ribonucleoside triphosphates as substrates.</text>
</comment>
<comment type="catalytic activity">
    <reaction evidence="1">
        <text>RNA(n) + a ribonucleoside 5'-triphosphate = RNA(n+1) + diphosphate</text>
        <dbReference type="Rhea" id="RHEA:21248"/>
        <dbReference type="Rhea" id="RHEA-COMP:14527"/>
        <dbReference type="Rhea" id="RHEA-COMP:17342"/>
        <dbReference type="ChEBI" id="CHEBI:33019"/>
        <dbReference type="ChEBI" id="CHEBI:61557"/>
        <dbReference type="ChEBI" id="CHEBI:140395"/>
        <dbReference type="EC" id="2.7.7.6"/>
    </reaction>
</comment>
<comment type="cofactor">
    <cofactor evidence="1">
        <name>Mg(2+)</name>
        <dbReference type="ChEBI" id="CHEBI:18420"/>
    </cofactor>
    <text evidence="1">Binds 1 Mg(2+) ion per subunit.</text>
</comment>
<comment type="cofactor">
    <cofactor evidence="1">
        <name>Zn(2+)</name>
        <dbReference type="ChEBI" id="CHEBI:29105"/>
    </cofactor>
    <text evidence="1">Binds 2 Zn(2+) ions per subunit.</text>
</comment>
<comment type="subunit">
    <text evidence="1">The RNAP catalytic core consists of 2 alpha, 1 beta, 1 beta' and 1 omega subunit. When a sigma factor is associated with the core the holoenzyme is formed, which can initiate transcription.</text>
</comment>
<comment type="similarity">
    <text evidence="1">Belongs to the RNA polymerase beta' chain family.</text>
</comment>
<gene>
    <name evidence="1" type="primary">rpoC</name>
    <name type="ordered locus">ETA_01560</name>
</gene>
<name>RPOC_ERWT9</name>
<dbReference type="EC" id="2.7.7.6" evidence="1"/>
<dbReference type="EMBL" id="CU468135">
    <property type="protein sequence ID" value="CAO95202.1"/>
    <property type="molecule type" value="Genomic_DNA"/>
</dbReference>
<dbReference type="RefSeq" id="WP_012439925.1">
    <property type="nucleotide sequence ID" value="NC_010694.1"/>
</dbReference>
<dbReference type="SMR" id="B2VG97"/>
<dbReference type="STRING" id="465817.ETA_01560"/>
<dbReference type="KEGG" id="eta:ETA_01560"/>
<dbReference type="eggNOG" id="COG0086">
    <property type="taxonomic scope" value="Bacteria"/>
</dbReference>
<dbReference type="HOGENOM" id="CLU_000524_3_1_6"/>
<dbReference type="OrthoDB" id="9815296at2"/>
<dbReference type="Proteomes" id="UP000001726">
    <property type="component" value="Chromosome"/>
</dbReference>
<dbReference type="GO" id="GO:0000428">
    <property type="term" value="C:DNA-directed RNA polymerase complex"/>
    <property type="evidence" value="ECO:0007669"/>
    <property type="project" value="UniProtKB-KW"/>
</dbReference>
<dbReference type="GO" id="GO:0003677">
    <property type="term" value="F:DNA binding"/>
    <property type="evidence" value="ECO:0007669"/>
    <property type="project" value="UniProtKB-UniRule"/>
</dbReference>
<dbReference type="GO" id="GO:0003899">
    <property type="term" value="F:DNA-directed RNA polymerase activity"/>
    <property type="evidence" value="ECO:0007669"/>
    <property type="project" value="UniProtKB-UniRule"/>
</dbReference>
<dbReference type="GO" id="GO:0000287">
    <property type="term" value="F:magnesium ion binding"/>
    <property type="evidence" value="ECO:0007669"/>
    <property type="project" value="UniProtKB-UniRule"/>
</dbReference>
<dbReference type="GO" id="GO:0008270">
    <property type="term" value="F:zinc ion binding"/>
    <property type="evidence" value="ECO:0007669"/>
    <property type="project" value="UniProtKB-UniRule"/>
</dbReference>
<dbReference type="GO" id="GO:0006351">
    <property type="term" value="P:DNA-templated transcription"/>
    <property type="evidence" value="ECO:0007669"/>
    <property type="project" value="UniProtKB-UniRule"/>
</dbReference>
<dbReference type="CDD" id="cd02655">
    <property type="entry name" value="RNAP_beta'_C"/>
    <property type="match status" value="1"/>
</dbReference>
<dbReference type="CDD" id="cd01609">
    <property type="entry name" value="RNAP_beta'_N"/>
    <property type="match status" value="1"/>
</dbReference>
<dbReference type="FunFam" id="1.10.132.30:FF:000003">
    <property type="entry name" value="DNA-directed RNA polymerase subunit beta"/>
    <property type="match status" value="1"/>
</dbReference>
<dbReference type="FunFam" id="1.10.150.390:FF:000002">
    <property type="entry name" value="DNA-directed RNA polymerase subunit beta"/>
    <property type="match status" value="1"/>
</dbReference>
<dbReference type="FunFam" id="1.10.274.100:FF:000002">
    <property type="entry name" value="DNA-directed RNA polymerase subunit beta"/>
    <property type="match status" value="1"/>
</dbReference>
<dbReference type="FunFam" id="1.10.40.90:FF:000001">
    <property type="entry name" value="DNA-directed RNA polymerase subunit beta"/>
    <property type="match status" value="1"/>
</dbReference>
<dbReference type="FunFam" id="2.40.50.100:FF:000012">
    <property type="entry name" value="DNA-directed RNA polymerase subunit beta"/>
    <property type="match status" value="1"/>
</dbReference>
<dbReference type="FunFam" id="2.40.50.100:FF:000016">
    <property type="entry name" value="DNA-directed RNA polymerase subunit beta"/>
    <property type="match status" value="1"/>
</dbReference>
<dbReference type="FunFam" id="2.40.50.100:FF:000019">
    <property type="entry name" value="DNA-directed RNA polymerase subunit beta"/>
    <property type="match status" value="1"/>
</dbReference>
<dbReference type="FunFam" id="4.10.860.120:FF:000001">
    <property type="entry name" value="DNA-directed RNA polymerase subunit beta"/>
    <property type="match status" value="1"/>
</dbReference>
<dbReference type="Gene3D" id="1.10.132.30">
    <property type="match status" value="1"/>
</dbReference>
<dbReference type="Gene3D" id="1.10.150.390">
    <property type="match status" value="1"/>
</dbReference>
<dbReference type="Gene3D" id="1.10.1790.20">
    <property type="match status" value="1"/>
</dbReference>
<dbReference type="Gene3D" id="1.10.40.90">
    <property type="match status" value="1"/>
</dbReference>
<dbReference type="Gene3D" id="2.40.40.20">
    <property type="match status" value="1"/>
</dbReference>
<dbReference type="Gene3D" id="2.40.50.100">
    <property type="match status" value="3"/>
</dbReference>
<dbReference type="Gene3D" id="4.10.860.120">
    <property type="entry name" value="RNA polymerase II, clamp domain"/>
    <property type="match status" value="1"/>
</dbReference>
<dbReference type="Gene3D" id="1.10.274.100">
    <property type="entry name" value="RNA polymerase Rpb1, domain 3"/>
    <property type="match status" value="1"/>
</dbReference>
<dbReference type="HAMAP" id="MF_01322">
    <property type="entry name" value="RNApol_bact_RpoC"/>
    <property type="match status" value="1"/>
</dbReference>
<dbReference type="InterPro" id="IPR045867">
    <property type="entry name" value="DNA-dir_RpoC_beta_prime"/>
</dbReference>
<dbReference type="InterPro" id="IPR012754">
    <property type="entry name" value="DNA-dir_RpoC_beta_prime_bact"/>
</dbReference>
<dbReference type="InterPro" id="IPR000722">
    <property type="entry name" value="RNA_pol_asu"/>
</dbReference>
<dbReference type="InterPro" id="IPR006592">
    <property type="entry name" value="RNA_pol_N"/>
</dbReference>
<dbReference type="InterPro" id="IPR007080">
    <property type="entry name" value="RNA_pol_Rpb1_1"/>
</dbReference>
<dbReference type="InterPro" id="IPR007066">
    <property type="entry name" value="RNA_pol_Rpb1_3"/>
</dbReference>
<dbReference type="InterPro" id="IPR042102">
    <property type="entry name" value="RNA_pol_Rpb1_3_sf"/>
</dbReference>
<dbReference type="InterPro" id="IPR007083">
    <property type="entry name" value="RNA_pol_Rpb1_4"/>
</dbReference>
<dbReference type="InterPro" id="IPR007081">
    <property type="entry name" value="RNA_pol_Rpb1_5"/>
</dbReference>
<dbReference type="InterPro" id="IPR044893">
    <property type="entry name" value="RNA_pol_Rpb1_clamp_domain"/>
</dbReference>
<dbReference type="InterPro" id="IPR038120">
    <property type="entry name" value="Rpb1_funnel_sf"/>
</dbReference>
<dbReference type="NCBIfam" id="TIGR02386">
    <property type="entry name" value="rpoC_TIGR"/>
    <property type="match status" value="1"/>
</dbReference>
<dbReference type="PANTHER" id="PTHR19376">
    <property type="entry name" value="DNA-DIRECTED RNA POLYMERASE"/>
    <property type="match status" value="1"/>
</dbReference>
<dbReference type="PANTHER" id="PTHR19376:SF54">
    <property type="entry name" value="DNA-DIRECTED RNA POLYMERASE SUBUNIT BETA"/>
    <property type="match status" value="1"/>
</dbReference>
<dbReference type="Pfam" id="PF04997">
    <property type="entry name" value="RNA_pol_Rpb1_1"/>
    <property type="match status" value="1"/>
</dbReference>
<dbReference type="Pfam" id="PF00623">
    <property type="entry name" value="RNA_pol_Rpb1_2"/>
    <property type="match status" value="2"/>
</dbReference>
<dbReference type="Pfam" id="PF04983">
    <property type="entry name" value="RNA_pol_Rpb1_3"/>
    <property type="match status" value="1"/>
</dbReference>
<dbReference type="Pfam" id="PF05000">
    <property type="entry name" value="RNA_pol_Rpb1_4"/>
    <property type="match status" value="1"/>
</dbReference>
<dbReference type="Pfam" id="PF04998">
    <property type="entry name" value="RNA_pol_Rpb1_5"/>
    <property type="match status" value="1"/>
</dbReference>
<dbReference type="SMART" id="SM00663">
    <property type="entry name" value="RPOLA_N"/>
    <property type="match status" value="1"/>
</dbReference>
<dbReference type="SUPFAM" id="SSF64484">
    <property type="entry name" value="beta and beta-prime subunits of DNA dependent RNA-polymerase"/>
    <property type="match status" value="1"/>
</dbReference>
<accession>B2VG97</accession>
<sequence>MKDLLKFLKAQTKTEEFDAIKIALASPDMIRSWSFGEVKKPETINYRTFKPERDGLFCARIFGPVKDYECLCGKYKRLKHRGVICEKCGVEVTQTKVRRERMGHIELASPTAHIWFLKSLPSRIGLLLDMPLRDIERVLYFESYVVIEGGMTNLEKRQILTEEQYLDALEEFGDEFDAKMGAEAIQALLKNMDLEQECETLREELNETNSETKRKKLTKRIKLLEAFVQSGNKPEWMILTVLPVLPPDLRPLVPLDGGRFATSDLNDLYRRVINRNNRLKRLLDLAAPDIIVRNEKRMLQEAVDALLDNGRRGRAITGSNKRPLKSLADMIKGKQGRFRQNLLGKRVDYSGRSVITVGPYLRLHQCGLPKKMALELFKPFIYGKLELRGLATTIKAAKKMVEREESVVWDILDEVIREHPVLLNRAPTLHRLGIQAFEPVLIEGKAIQLHPLVCAAYNADFDGDQMAVHVPLTLEAQLEARALMMSTNNILSPANGEPIIVPSQDVVLGLYYMTRDCVNAKGEGMVLTGPKEAERVYRAGLASLHARVKVRITEHEKNEQDEWVAKTSIIDTTIGRAILWMIVPKGLPYSIVNQALGKKAISKMLNTCYRILGLKPTVIFADQTMYTGFAYAARSGASVGIDDMVIPEKKVEIITEAEAEVAEIQQQFQSGLVTAGERYNKVIDIWAAANERVAKAMMENLSTEVVINRDGVEERQVSFNSIFMMADSGARGSAAQIRQLAGMRGLMAKPDGSIIETPITANFREGLNVLQYFISTHGARKGLADTALKTANSGYLTRRLVDVAQDLVVTEDDCGTHEGIMMTPVIEGGDVKEPLRERVLGRVTAEDVLKPGTADILLPRNTLLHEQQCDLLEEHSVDSLKVRSVVSCETDFGVCAHCYGRDLARGHIINKGEAIGVIAAQSIGEPGTQLTMRTFHIGGAASRAAAESSIQVKNKGTLKLINAKSVTNSAGKLVITSRNVELKMIDEFGRTKESYKVPYGSTMAKGDGEQVAAGETVANWDPHTMPVITEVSGFIRFTDMIDGQTITRQTDDLTGLSSLVILDSAERTAGGKDLRPALKIVDANGNDVMIPGSDMPAQYFLPGKAIVQLEDGIKISSGDTLARVPQESGGTKDITGGLPRVADLFEARRPKEPAILAEISGIISFGKETKGKRRLVITPIDGSDHYEEMIPKWRQLNVFEGERVERGDVVSDGPESPHDILRLRGVHAVTRYITNEVQEVYRLQGVKINDKHIEVIVRQMLRKATIASAGSTDFLDGEQVEFSRVKIANRELEANGKISATFARDLLGITKASLATESFISAASFQETTRVLTEAAVAGKRDELRGLKENVIVGRLIPAGTGYAYHQDRMRRKAAGEAPVVPQVTADEASASLAELLNAGLGGRDDE</sequence>